<comment type="function">
    <text evidence="1">Catalyzes the biosynthesis of agmatine from arginine.</text>
</comment>
<comment type="catalytic activity">
    <reaction evidence="1">
        <text>L-arginine + H(+) = agmatine + CO2</text>
        <dbReference type="Rhea" id="RHEA:17641"/>
        <dbReference type="ChEBI" id="CHEBI:15378"/>
        <dbReference type="ChEBI" id="CHEBI:16526"/>
        <dbReference type="ChEBI" id="CHEBI:32682"/>
        <dbReference type="ChEBI" id="CHEBI:58145"/>
        <dbReference type="EC" id="4.1.1.19"/>
    </reaction>
</comment>
<comment type="cofactor">
    <cofactor evidence="1">
        <name>Mg(2+)</name>
        <dbReference type="ChEBI" id="CHEBI:18420"/>
    </cofactor>
</comment>
<comment type="cofactor">
    <cofactor evidence="1">
        <name>pyridoxal 5'-phosphate</name>
        <dbReference type="ChEBI" id="CHEBI:597326"/>
    </cofactor>
</comment>
<comment type="pathway">
    <text evidence="1">Amine and polyamine biosynthesis; agmatine biosynthesis; agmatine from L-arginine: step 1/1.</text>
</comment>
<comment type="similarity">
    <text evidence="1">Belongs to the Orn/Lys/Arg decarboxylase class-II family. SpeA subfamily.</text>
</comment>
<accession>Q31DD8</accession>
<sequence>MTNFEPKKLKNIWTIEDSISTYNIDKWGDKYFSINSKGNISVTKDIKSENKIDLFKLVKELKSREINPPLIIRFNDILKDRINALHDSFFKAIKTYKYKNIYQGVFPVKCNQQKNVLEKIIEFGSQWNFGLEVGSKSELLIGLALLENQNSLLICNGYKDKKYIEIATLARKLGKNPIIVIEQRDEVKRIIQAVQELNATPLIGIRAKLSSKSSGRWGKSIGDNSKFGLSIPEIMLTIKELKEANLINEMKLLHFHIGSQISDIAVIKDALQEASQIYVELCKLGAPMQYIDVGGGLGIDFDGTKTSSNTSTNYSLQNYANDVIATIKDSCELNNIKHPIIISESGRAIISHCSVLIFNVLGTSHVSSKLQIFDKKNQQLIISNLLETFYELKKLKNKKINLSQIIELWNDAKKFKEDCLVAFRLGFLSLAERAYAEELTWACAKEISKNLNNDAINHPDLSEITETLASTYYANLSIFKSIPDSWAINQIFPIVPIHRHLEEPFCKGNFADLTCDSDGKLNNFIDDGKIKSLLNLHKPEEDKDYLIGIFMTGAYQEALGNLHNLFGSTNVVHIDINQDNSYKVKNIIKEDSKSEILQLLDYSSASLVESIRINTESAIDQKKLTIEEARKLMDQIEISLRKSSYLSE</sequence>
<dbReference type="EC" id="4.1.1.19" evidence="1"/>
<dbReference type="EMBL" id="CP000111">
    <property type="protein sequence ID" value="ABB49107.1"/>
    <property type="molecule type" value="Genomic_DNA"/>
</dbReference>
<dbReference type="RefSeq" id="WP_011375611.1">
    <property type="nucleotide sequence ID" value="NC_007577.1"/>
</dbReference>
<dbReference type="SMR" id="Q31DD8"/>
<dbReference type="STRING" id="74546.PMT9312_0046"/>
<dbReference type="KEGG" id="pmi:PMT9312_0046"/>
<dbReference type="eggNOG" id="COG1166">
    <property type="taxonomic scope" value="Bacteria"/>
</dbReference>
<dbReference type="HOGENOM" id="CLU_027243_1_0_3"/>
<dbReference type="OrthoDB" id="9802658at2"/>
<dbReference type="UniPathway" id="UPA00186">
    <property type="reaction ID" value="UER00284"/>
</dbReference>
<dbReference type="Proteomes" id="UP000002715">
    <property type="component" value="Chromosome"/>
</dbReference>
<dbReference type="GO" id="GO:0008792">
    <property type="term" value="F:arginine decarboxylase activity"/>
    <property type="evidence" value="ECO:0007669"/>
    <property type="project" value="UniProtKB-UniRule"/>
</dbReference>
<dbReference type="GO" id="GO:0046872">
    <property type="term" value="F:metal ion binding"/>
    <property type="evidence" value="ECO:0007669"/>
    <property type="project" value="UniProtKB-KW"/>
</dbReference>
<dbReference type="GO" id="GO:0006527">
    <property type="term" value="P:arginine catabolic process"/>
    <property type="evidence" value="ECO:0007669"/>
    <property type="project" value="InterPro"/>
</dbReference>
<dbReference type="GO" id="GO:0008295">
    <property type="term" value="P:spermidine biosynthetic process"/>
    <property type="evidence" value="ECO:0007669"/>
    <property type="project" value="UniProtKB-UniRule"/>
</dbReference>
<dbReference type="CDD" id="cd06830">
    <property type="entry name" value="PLPDE_III_ADC"/>
    <property type="match status" value="1"/>
</dbReference>
<dbReference type="Gene3D" id="1.20.58.930">
    <property type="match status" value="1"/>
</dbReference>
<dbReference type="Gene3D" id="3.20.20.10">
    <property type="entry name" value="Alanine racemase"/>
    <property type="match status" value="1"/>
</dbReference>
<dbReference type="Gene3D" id="2.40.37.10">
    <property type="entry name" value="Lyase, Ornithine Decarboxylase, Chain A, domain 1"/>
    <property type="match status" value="1"/>
</dbReference>
<dbReference type="HAMAP" id="MF_01417">
    <property type="entry name" value="SpeA"/>
    <property type="match status" value="1"/>
</dbReference>
<dbReference type="InterPro" id="IPR009006">
    <property type="entry name" value="Ala_racemase/Decarboxylase_C"/>
</dbReference>
<dbReference type="InterPro" id="IPR040634">
    <property type="entry name" value="Arg_decarb_HB"/>
</dbReference>
<dbReference type="InterPro" id="IPR041128">
    <property type="entry name" value="Arg_decarbox_C"/>
</dbReference>
<dbReference type="InterPro" id="IPR002985">
    <property type="entry name" value="Arg_decrbxlase"/>
</dbReference>
<dbReference type="InterPro" id="IPR022657">
    <property type="entry name" value="De-COase2_CS"/>
</dbReference>
<dbReference type="InterPro" id="IPR022644">
    <property type="entry name" value="De-COase2_N"/>
</dbReference>
<dbReference type="InterPro" id="IPR022653">
    <property type="entry name" value="De-COase2_pyr-phos_BS"/>
</dbReference>
<dbReference type="InterPro" id="IPR000183">
    <property type="entry name" value="Orn/DAP/Arg_de-COase"/>
</dbReference>
<dbReference type="InterPro" id="IPR029066">
    <property type="entry name" value="PLP-binding_barrel"/>
</dbReference>
<dbReference type="NCBIfam" id="NF003763">
    <property type="entry name" value="PRK05354.1"/>
    <property type="match status" value="1"/>
</dbReference>
<dbReference type="NCBIfam" id="TIGR01273">
    <property type="entry name" value="speA"/>
    <property type="match status" value="1"/>
</dbReference>
<dbReference type="PANTHER" id="PTHR43295">
    <property type="entry name" value="ARGININE DECARBOXYLASE"/>
    <property type="match status" value="1"/>
</dbReference>
<dbReference type="PANTHER" id="PTHR43295:SF9">
    <property type="entry name" value="BIOSYNTHETIC ARGININE DECARBOXYLASE"/>
    <property type="match status" value="1"/>
</dbReference>
<dbReference type="Pfam" id="PF17810">
    <property type="entry name" value="Arg_decarb_HB"/>
    <property type="match status" value="1"/>
</dbReference>
<dbReference type="Pfam" id="PF17944">
    <property type="entry name" value="Arg_decarbox_C"/>
    <property type="match status" value="1"/>
</dbReference>
<dbReference type="Pfam" id="PF02784">
    <property type="entry name" value="Orn_Arg_deC_N"/>
    <property type="match status" value="1"/>
</dbReference>
<dbReference type="PIRSF" id="PIRSF001336">
    <property type="entry name" value="Arg_decrbxlase"/>
    <property type="match status" value="1"/>
</dbReference>
<dbReference type="PRINTS" id="PR01180">
    <property type="entry name" value="ARGDCRBXLASE"/>
</dbReference>
<dbReference type="PRINTS" id="PR01179">
    <property type="entry name" value="ODADCRBXLASE"/>
</dbReference>
<dbReference type="SUPFAM" id="SSF50621">
    <property type="entry name" value="Alanine racemase C-terminal domain-like"/>
    <property type="match status" value="1"/>
</dbReference>
<dbReference type="SUPFAM" id="SSF51419">
    <property type="entry name" value="PLP-binding barrel"/>
    <property type="match status" value="1"/>
</dbReference>
<dbReference type="PROSITE" id="PS00878">
    <property type="entry name" value="ODR_DC_2_1"/>
    <property type="match status" value="1"/>
</dbReference>
<dbReference type="PROSITE" id="PS00879">
    <property type="entry name" value="ODR_DC_2_2"/>
    <property type="match status" value="1"/>
</dbReference>
<protein>
    <recommendedName>
        <fullName evidence="1">Biosynthetic arginine decarboxylase</fullName>
        <shortName evidence="1">ADC</shortName>
        <ecNumber evidence="1">4.1.1.19</ecNumber>
    </recommendedName>
</protein>
<keyword id="KW-0210">Decarboxylase</keyword>
<keyword id="KW-0456">Lyase</keyword>
<keyword id="KW-0460">Magnesium</keyword>
<keyword id="KW-0479">Metal-binding</keyword>
<keyword id="KW-0620">Polyamine biosynthesis</keyword>
<keyword id="KW-0663">Pyridoxal phosphate</keyword>
<keyword id="KW-0745">Spermidine biosynthesis</keyword>
<name>SPEA_PROM9</name>
<gene>
    <name evidence="1" type="primary">speA</name>
    <name type="ordered locus">PMT9312_0046</name>
</gene>
<reference key="1">
    <citation type="journal article" date="2006" name="Science">
        <title>Genomic islands and the ecology and evolution of Prochlorococcus.</title>
        <authorList>
            <person name="Coleman M.L."/>
            <person name="Sullivan M.B."/>
            <person name="Martiny A.C."/>
            <person name="Steglich C."/>
            <person name="Barry K."/>
            <person name="Delong E.F."/>
            <person name="Chisholm S.W."/>
        </authorList>
    </citation>
    <scope>NUCLEOTIDE SEQUENCE [LARGE SCALE GENOMIC DNA]</scope>
    <source>
        <strain>MIT 9312</strain>
    </source>
</reference>
<proteinExistence type="inferred from homology"/>
<organism>
    <name type="scientific">Prochlorococcus marinus (strain MIT 9312)</name>
    <dbReference type="NCBI Taxonomy" id="74546"/>
    <lineage>
        <taxon>Bacteria</taxon>
        <taxon>Bacillati</taxon>
        <taxon>Cyanobacteriota</taxon>
        <taxon>Cyanophyceae</taxon>
        <taxon>Synechococcales</taxon>
        <taxon>Prochlorococcaceae</taxon>
        <taxon>Prochlorococcus</taxon>
    </lineage>
</organism>
<evidence type="ECO:0000255" key="1">
    <source>
        <dbReference type="HAMAP-Rule" id="MF_01417"/>
    </source>
</evidence>
<feature type="chain" id="PRO_1000024261" description="Biosynthetic arginine decarboxylase">
    <location>
        <begin position="1"/>
        <end position="648"/>
    </location>
</feature>
<feature type="binding site" evidence="1">
    <location>
        <begin position="291"/>
        <end position="301"/>
    </location>
    <ligand>
        <name>substrate</name>
    </ligand>
</feature>
<feature type="modified residue" description="N6-(pyridoxal phosphate)lysine" evidence="1">
    <location>
        <position position="109"/>
    </location>
</feature>